<feature type="chain" id="PRO_0000317230" description="Uncharacterized protein C19F5.03">
    <location>
        <begin position="1"/>
        <end position="598"/>
    </location>
</feature>
<feature type="transmembrane region" description="Helical" evidence="1">
    <location>
        <begin position="508"/>
        <end position="528"/>
    </location>
</feature>
<feature type="transmembrane region" description="Helical" evidence="1">
    <location>
        <begin position="535"/>
        <end position="555"/>
    </location>
</feature>
<feature type="domain" description="SAC" evidence="2">
    <location>
        <begin position="106"/>
        <end position="441"/>
    </location>
</feature>
<feature type="modified residue" description="Phosphoserine" evidence="4">
    <location>
        <position position="46"/>
    </location>
</feature>
<gene>
    <name type="ORF">SPBC19F5.03</name>
</gene>
<reference key="1">
    <citation type="journal article" date="2002" name="Nature">
        <title>The genome sequence of Schizosaccharomyces pombe.</title>
        <authorList>
            <person name="Wood V."/>
            <person name="Gwilliam R."/>
            <person name="Rajandream M.A."/>
            <person name="Lyne M.H."/>
            <person name="Lyne R."/>
            <person name="Stewart A."/>
            <person name="Sgouros J.G."/>
            <person name="Peat N."/>
            <person name="Hayles J."/>
            <person name="Baker S.G."/>
            <person name="Basham D."/>
            <person name="Bowman S."/>
            <person name="Brooks K."/>
            <person name="Brown D."/>
            <person name="Brown S."/>
            <person name="Chillingworth T."/>
            <person name="Churcher C.M."/>
            <person name="Collins M."/>
            <person name="Connor R."/>
            <person name="Cronin A."/>
            <person name="Davis P."/>
            <person name="Feltwell T."/>
            <person name="Fraser A."/>
            <person name="Gentles S."/>
            <person name="Goble A."/>
            <person name="Hamlin N."/>
            <person name="Harris D.E."/>
            <person name="Hidalgo J."/>
            <person name="Hodgson G."/>
            <person name="Holroyd S."/>
            <person name="Hornsby T."/>
            <person name="Howarth S."/>
            <person name="Huckle E.J."/>
            <person name="Hunt S."/>
            <person name="Jagels K."/>
            <person name="James K.D."/>
            <person name="Jones L."/>
            <person name="Jones M."/>
            <person name="Leather S."/>
            <person name="McDonald S."/>
            <person name="McLean J."/>
            <person name="Mooney P."/>
            <person name="Moule S."/>
            <person name="Mungall K.L."/>
            <person name="Murphy L.D."/>
            <person name="Niblett D."/>
            <person name="Odell C."/>
            <person name="Oliver K."/>
            <person name="O'Neil S."/>
            <person name="Pearson D."/>
            <person name="Quail M.A."/>
            <person name="Rabbinowitsch E."/>
            <person name="Rutherford K.M."/>
            <person name="Rutter S."/>
            <person name="Saunders D."/>
            <person name="Seeger K."/>
            <person name="Sharp S."/>
            <person name="Skelton J."/>
            <person name="Simmonds M.N."/>
            <person name="Squares R."/>
            <person name="Squares S."/>
            <person name="Stevens K."/>
            <person name="Taylor K."/>
            <person name="Taylor R.G."/>
            <person name="Tivey A."/>
            <person name="Walsh S.V."/>
            <person name="Warren T."/>
            <person name="Whitehead S."/>
            <person name="Woodward J.R."/>
            <person name="Volckaert G."/>
            <person name="Aert R."/>
            <person name="Robben J."/>
            <person name="Grymonprez B."/>
            <person name="Weltjens I."/>
            <person name="Vanstreels E."/>
            <person name="Rieger M."/>
            <person name="Schaefer M."/>
            <person name="Mueller-Auer S."/>
            <person name="Gabel C."/>
            <person name="Fuchs M."/>
            <person name="Duesterhoeft A."/>
            <person name="Fritzc C."/>
            <person name="Holzer E."/>
            <person name="Moestl D."/>
            <person name="Hilbert H."/>
            <person name="Borzym K."/>
            <person name="Langer I."/>
            <person name="Beck A."/>
            <person name="Lehrach H."/>
            <person name="Reinhardt R."/>
            <person name="Pohl T.M."/>
            <person name="Eger P."/>
            <person name="Zimmermann W."/>
            <person name="Wedler H."/>
            <person name="Wambutt R."/>
            <person name="Purnelle B."/>
            <person name="Goffeau A."/>
            <person name="Cadieu E."/>
            <person name="Dreano S."/>
            <person name="Gloux S."/>
            <person name="Lelaure V."/>
            <person name="Mottier S."/>
            <person name="Galibert F."/>
            <person name="Aves S.J."/>
            <person name="Xiang Z."/>
            <person name="Hunt C."/>
            <person name="Moore K."/>
            <person name="Hurst S.M."/>
            <person name="Lucas M."/>
            <person name="Rochet M."/>
            <person name="Gaillardin C."/>
            <person name="Tallada V.A."/>
            <person name="Garzon A."/>
            <person name="Thode G."/>
            <person name="Daga R.R."/>
            <person name="Cruzado L."/>
            <person name="Jimenez J."/>
            <person name="Sanchez M."/>
            <person name="del Rey F."/>
            <person name="Benito J."/>
            <person name="Dominguez A."/>
            <person name="Revuelta J.L."/>
            <person name="Moreno S."/>
            <person name="Armstrong J."/>
            <person name="Forsburg S.L."/>
            <person name="Cerutti L."/>
            <person name="Lowe T."/>
            <person name="McCombie W.R."/>
            <person name="Paulsen I."/>
            <person name="Potashkin J."/>
            <person name="Shpakovski G.V."/>
            <person name="Ussery D."/>
            <person name="Barrell B.G."/>
            <person name="Nurse P."/>
        </authorList>
    </citation>
    <scope>NUCLEOTIDE SEQUENCE [LARGE SCALE GENOMIC DNA]</scope>
    <source>
        <strain>972 / ATCC 24843</strain>
    </source>
</reference>
<reference key="2">
    <citation type="journal article" date="2006" name="Nat. Biotechnol.">
        <title>ORFeome cloning and global analysis of protein localization in the fission yeast Schizosaccharomyces pombe.</title>
        <authorList>
            <person name="Matsuyama A."/>
            <person name="Arai R."/>
            <person name="Yashiroda Y."/>
            <person name="Shirai A."/>
            <person name="Kamata A."/>
            <person name="Sekido S."/>
            <person name="Kobayashi Y."/>
            <person name="Hashimoto A."/>
            <person name="Hamamoto M."/>
            <person name="Hiraoka Y."/>
            <person name="Horinouchi S."/>
            <person name="Yoshida M."/>
        </authorList>
    </citation>
    <scope>SUBCELLULAR LOCATION [LARGE SCALE ANALYSIS]</scope>
</reference>
<reference key="3">
    <citation type="journal article" date="2008" name="J. Proteome Res.">
        <title>Phosphoproteome analysis of fission yeast.</title>
        <authorList>
            <person name="Wilson-Grady J.T."/>
            <person name="Villen J."/>
            <person name="Gygi S.P."/>
        </authorList>
    </citation>
    <scope>PHOSPHORYLATION [LARGE SCALE ANALYSIS] AT SER-46</scope>
    <scope>IDENTIFICATION BY MASS SPECTROMETRY</scope>
</reference>
<keyword id="KW-0256">Endoplasmic reticulum</keyword>
<keyword id="KW-0378">Hydrolase</keyword>
<keyword id="KW-0472">Membrane</keyword>
<keyword id="KW-0597">Phosphoprotein</keyword>
<keyword id="KW-1185">Reference proteome</keyword>
<keyword id="KW-0812">Transmembrane</keyword>
<keyword id="KW-1133">Transmembrane helix</keyword>
<protein>
    <recommendedName>
        <fullName>Uncharacterized protein C19F5.03</fullName>
        <ecNumber>3.1.3.-</ecNumber>
    </recommendedName>
</protein>
<dbReference type="EC" id="3.1.3.-"/>
<dbReference type="EMBL" id="CU329671">
    <property type="protein sequence ID" value="CAA18651.1"/>
    <property type="molecule type" value="Genomic_DNA"/>
</dbReference>
<dbReference type="PIR" id="T39821">
    <property type="entry name" value="T39821"/>
</dbReference>
<dbReference type="SMR" id="O60162"/>
<dbReference type="BioGRID" id="276921">
    <property type="interactions" value="5"/>
</dbReference>
<dbReference type="FunCoup" id="O60162">
    <property type="interactions" value="1147"/>
</dbReference>
<dbReference type="STRING" id="284812.O60162"/>
<dbReference type="iPTMnet" id="O60162"/>
<dbReference type="PaxDb" id="4896-SPBC19F5.03.1"/>
<dbReference type="EnsemblFungi" id="SPBC19F5.03.1">
    <property type="protein sequence ID" value="SPBC19F5.03.1:pep"/>
    <property type="gene ID" value="SPBC19F5.03"/>
</dbReference>
<dbReference type="KEGG" id="spo:2540393"/>
<dbReference type="PomBase" id="SPBC19F5.03"/>
<dbReference type="VEuPathDB" id="FungiDB:SPBC19F5.03"/>
<dbReference type="eggNOG" id="KOG1889">
    <property type="taxonomic scope" value="Eukaryota"/>
</dbReference>
<dbReference type="HOGENOM" id="CLU_003016_7_4_1"/>
<dbReference type="InParanoid" id="O60162"/>
<dbReference type="OMA" id="ITKAQPV"/>
<dbReference type="PhylomeDB" id="O60162"/>
<dbReference type="PRO" id="PR:O60162"/>
<dbReference type="Proteomes" id="UP000002485">
    <property type="component" value="Chromosome II"/>
</dbReference>
<dbReference type="GO" id="GO:0005938">
    <property type="term" value="C:cell cortex"/>
    <property type="evidence" value="ECO:0000314"/>
    <property type="project" value="PomBase"/>
</dbReference>
<dbReference type="GO" id="GO:0005783">
    <property type="term" value="C:endoplasmic reticulum"/>
    <property type="evidence" value="ECO:0000314"/>
    <property type="project" value="PomBase"/>
</dbReference>
<dbReference type="GO" id="GO:0005789">
    <property type="term" value="C:endoplasmic reticulum membrane"/>
    <property type="evidence" value="ECO:0000266"/>
    <property type="project" value="PomBase"/>
</dbReference>
<dbReference type="GO" id="GO:0000139">
    <property type="term" value="C:Golgi membrane"/>
    <property type="evidence" value="ECO:0000266"/>
    <property type="project" value="PomBase"/>
</dbReference>
<dbReference type="GO" id="GO:0005741">
    <property type="term" value="C:mitochondrial outer membrane"/>
    <property type="evidence" value="ECO:0000266"/>
    <property type="project" value="PomBase"/>
</dbReference>
<dbReference type="GO" id="GO:0017059">
    <property type="term" value="C:serine palmitoyltransferase complex"/>
    <property type="evidence" value="ECO:0000266"/>
    <property type="project" value="PomBase"/>
</dbReference>
<dbReference type="GO" id="GO:0043812">
    <property type="term" value="F:phosphatidylinositol-4-phosphate phosphatase activity"/>
    <property type="evidence" value="ECO:0000318"/>
    <property type="project" value="GO_Central"/>
</dbReference>
<dbReference type="GO" id="GO:0046856">
    <property type="term" value="P:phosphatidylinositol dephosphorylation"/>
    <property type="evidence" value="ECO:0000318"/>
    <property type="project" value="GO_Central"/>
</dbReference>
<dbReference type="GO" id="GO:0046512">
    <property type="term" value="P:sphingosine biosynthetic process"/>
    <property type="evidence" value="ECO:0000305"/>
    <property type="project" value="PomBase"/>
</dbReference>
<dbReference type="InterPro" id="IPR002013">
    <property type="entry name" value="SAC_dom"/>
</dbReference>
<dbReference type="PANTHER" id="PTHR45662">
    <property type="entry name" value="PHOSPHATIDYLINOSITIDE PHOSPHATASE SAC1"/>
    <property type="match status" value="1"/>
</dbReference>
<dbReference type="PANTHER" id="PTHR45662:SF2">
    <property type="entry name" value="PHOSPHATIDYLINOSITOL-3-PHOSPHATASE SAC1"/>
    <property type="match status" value="1"/>
</dbReference>
<dbReference type="Pfam" id="PF02383">
    <property type="entry name" value="Syja_N"/>
    <property type="match status" value="1"/>
</dbReference>
<dbReference type="PROSITE" id="PS50275">
    <property type="entry name" value="SAC"/>
    <property type="match status" value="1"/>
</dbReference>
<accession>O60162</accession>
<organism>
    <name type="scientific">Schizosaccharomyces pombe (strain 972 / ATCC 24843)</name>
    <name type="common">Fission yeast</name>
    <dbReference type="NCBI Taxonomy" id="284812"/>
    <lineage>
        <taxon>Eukaryota</taxon>
        <taxon>Fungi</taxon>
        <taxon>Dikarya</taxon>
        <taxon>Ascomycota</taxon>
        <taxon>Taphrinomycotina</taxon>
        <taxon>Schizosaccharomycetes</taxon>
        <taxon>Schizosaccharomycetales</taxon>
        <taxon>Schizosaccharomycetaceae</taxon>
        <taxon>Schizosaccharomyces</taxon>
    </lineage>
</organism>
<name>YG23_SCHPO</name>
<sequence>MVQFEANEKQFKLRREDCCLTIDRESGAVSFEPDELKPVARSKENSVTLFGSIKLKKDKYLILATEKSSAAQILGHKIYRVHKFEVIPYRNLLADDQDELDLYNLLQNHLKTGPFYFSYTWDLTNSLQRSCTDEGKASPILRSDKRFFWNEFASKDFIDLIGAHSEVSLFITPMIYGFITSASTIVKGRTITLALISRRSKQRAGTRYFTRGLDENGNPANFNETEQITIVSDEKSEVTYSHVQTRGSVPAFWAEVNNLRYKPLMVANSASMAAAAAKKHFDEQISIYGDQVVVNLVNCKGHELPIKQLYENVIRRLDNPHIHYHYFDFHKECSHMRWDRVSLLLNEIQPELEEQGYTTLDTQKYRVLSRQNGVVRSNCMDCLDRTNVVQSCIGRWVLTNQLRKCGIIGATHPLRSVIPLDNIFCNIWSDNADYISLSYSGTGALKTDFTRTGIRTRKGAFNDFVNSAKRYILNNFYDGARQDAYDLVLGQFRPDVNFRYRLDLRPLTIRCVPYILLACLILFFMTLFSRSSSTILPPSILLILTFLGIVASLYYCFAHGLQFINWPRLLLPSFLRSDMTPEGRVFVINRQLASKHKV</sequence>
<proteinExistence type="evidence at protein level"/>
<evidence type="ECO:0000255" key="1"/>
<evidence type="ECO:0000255" key="2">
    <source>
        <dbReference type="PROSITE-ProRule" id="PRU00183"/>
    </source>
</evidence>
<evidence type="ECO:0000269" key="3">
    <source>
    </source>
</evidence>
<evidence type="ECO:0000269" key="4">
    <source>
    </source>
</evidence>
<comment type="subcellular location">
    <subcellularLocation>
        <location evidence="3">Endoplasmic reticulum membrane</location>
        <topology evidence="3">Multi-pass membrane protein</topology>
    </subcellularLocation>
</comment>